<name>TAF12_HUMAN</name>
<reference key="1">
    <citation type="journal article" date="1996" name="Nature">
        <title>A histone octamer-like structure within TFIID.</title>
        <authorList>
            <person name="Hoffmann A."/>
            <person name="Chiang C.M."/>
            <person name="Oelgeschlager T."/>
            <person name="Xie X."/>
            <person name="Burley S.K."/>
            <person name="Nakatani Y."/>
            <person name="Roeder R.G."/>
        </authorList>
    </citation>
    <scope>NUCLEOTIDE SEQUENCE [MRNA] (ISOFORM TAFII20)</scope>
    <scope>FUNCTION</scope>
</reference>
<reference key="2">
    <citation type="journal article" date="1996" name="J. Biol. Chem.">
        <title>Cloning and characterization of human TAF20/15. Multiple interactions suggest a central role in TFIID complex formation.</title>
        <authorList>
            <person name="Hoffmann A."/>
            <person name="Roeder R.G."/>
        </authorList>
    </citation>
    <scope>NUCLEOTIDE SEQUENCE [MRNA] (ISOFORMS TAFII15 AND TAFII20)</scope>
    <scope>FUNCTION</scope>
</reference>
<reference key="3">
    <citation type="journal article" date="1996" name="Gene">
        <title>Isolation and characterization of a cDNA encoding a novel human transcription factor TFIID subunit containing similarities with histones H2B and H3.</title>
        <authorList>
            <person name="Choi B."/>
            <person name="Bando M."/>
            <person name="Hasegawa S."/>
            <person name="Horikoshi M."/>
        </authorList>
    </citation>
    <scope>NUCLEOTIDE SEQUENCE [MRNA] (ISOFORM TAFII20)</scope>
</reference>
<reference key="4">
    <citation type="journal article" date="1995" name="EMBO J.">
        <title>Cloning and characterization of hTAFII18, hTAFII20 and hTAFII28: three subunits of the human transcription factor TFIID.</title>
        <authorList>
            <person name="Mengus G."/>
            <person name="May M."/>
            <person name="Jacq X."/>
            <person name="Staub A."/>
            <person name="Tora L."/>
            <person name="Chambon P."/>
            <person name="Davidson I."/>
        </authorList>
    </citation>
    <scope>NUCLEOTIDE SEQUENCE [MRNA] (ISOFORM TAFII20)</scope>
    <scope>PARTIAL PROTEIN SEQUENCE</scope>
    <scope>FUNCTION</scope>
    <scope>INTERACTION WITH TBP</scope>
</reference>
<reference key="5">
    <citation type="submission" date="2003-05" db="EMBL/GenBank/DDBJ databases">
        <title>Cloning of human full-length CDSs in BD Creator(TM) system donor vector.</title>
        <authorList>
            <person name="Kalnine N."/>
            <person name="Chen X."/>
            <person name="Rolfs A."/>
            <person name="Halleck A."/>
            <person name="Hines L."/>
            <person name="Eisenstein S."/>
            <person name="Koundinya M."/>
            <person name="Raphael J."/>
            <person name="Moreira D."/>
            <person name="Kelley T."/>
            <person name="LaBaer J."/>
            <person name="Lin Y."/>
            <person name="Phelan M."/>
            <person name="Farmer A."/>
        </authorList>
    </citation>
    <scope>NUCLEOTIDE SEQUENCE [LARGE SCALE MRNA] (ISOFORM TAFII20)</scope>
</reference>
<reference key="6">
    <citation type="submission" date="2002-12" db="EMBL/GenBank/DDBJ databases">
        <authorList>
            <consortium name="NIEHS SNPs program"/>
        </authorList>
    </citation>
    <scope>NUCLEOTIDE SEQUENCE [GENOMIC DNA]</scope>
</reference>
<reference key="7">
    <citation type="journal article" date="2006" name="Nature">
        <title>The DNA sequence and biological annotation of human chromosome 1.</title>
        <authorList>
            <person name="Gregory S.G."/>
            <person name="Barlow K.F."/>
            <person name="McLay K.E."/>
            <person name="Kaul R."/>
            <person name="Swarbreck D."/>
            <person name="Dunham A."/>
            <person name="Scott C.E."/>
            <person name="Howe K.L."/>
            <person name="Woodfine K."/>
            <person name="Spencer C.C.A."/>
            <person name="Jones M.C."/>
            <person name="Gillson C."/>
            <person name="Searle S."/>
            <person name="Zhou Y."/>
            <person name="Kokocinski F."/>
            <person name="McDonald L."/>
            <person name="Evans R."/>
            <person name="Phillips K."/>
            <person name="Atkinson A."/>
            <person name="Cooper R."/>
            <person name="Jones C."/>
            <person name="Hall R.E."/>
            <person name="Andrews T.D."/>
            <person name="Lloyd C."/>
            <person name="Ainscough R."/>
            <person name="Almeida J.P."/>
            <person name="Ambrose K.D."/>
            <person name="Anderson F."/>
            <person name="Andrew R.W."/>
            <person name="Ashwell R.I.S."/>
            <person name="Aubin K."/>
            <person name="Babbage A.K."/>
            <person name="Bagguley C.L."/>
            <person name="Bailey J."/>
            <person name="Beasley H."/>
            <person name="Bethel G."/>
            <person name="Bird C.P."/>
            <person name="Bray-Allen S."/>
            <person name="Brown J.Y."/>
            <person name="Brown A.J."/>
            <person name="Buckley D."/>
            <person name="Burton J."/>
            <person name="Bye J."/>
            <person name="Carder C."/>
            <person name="Chapman J.C."/>
            <person name="Clark S.Y."/>
            <person name="Clarke G."/>
            <person name="Clee C."/>
            <person name="Cobley V."/>
            <person name="Collier R.E."/>
            <person name="Corby N."/>
            <person name="Coville G.J."/>
            <person name="Davies J."/>
            <person name="Deadman R."/>
            <person name="Dunn M."/>
            <person name="Earthrowl M."/>
            <person name="Ellington A.G."/>
            <person name="Errington H."/>
            <person name="Frankish A."/>
            <person name="Frankland J."/>
            <person name="French L."/>
            <person name="Garner P."/>
            <person name="Garnett J."/>
            <person name="Gay L."/>
            <person name="Ghori M.R.J."/>
            <person name="Gibson R."/>
            <person name="Gilby L.M."/>
            <person name="Gillett W."/>
            <person name="Glithero R.J."/>
            <person name="Grafham D.V."/>
            <person name="Griffiths C."/>
            <person name="Griffiths-Jones S."/>
            <person name="Grocock R."/>
            <person name="Hammond S."/>
            <person name="Harrison E.S.I."/>
            <person name="Hart E."/>
            <person name="Haugen E."/>
            <person name="Heath P.D."/>
            <person name="Holmes S."/>
            <person name="Holt K."/>
            <person name="Howden P.J."/>
            <person name="Hunt A.R."/>
            <person name="Hunt S.E."/>
            <person name="Hunter G."/>
            <person name="Isherwood J."/>
            <person name="James R."/>
            <person name="Johnson C."/>
            <person name="Johnson D."/>
            <person name="Joy A."/>
            <person name="Kay M."/>
            <person name="Kershaw J.K."/>
            <person name="Kibukawa M."/>
            <person name="Kimberley A.M."/>
            <person name="King A."/>
            <person name="Knights A.J."/>
            <person name="Lad H."/>
            <person name="Laird G."/>
            <person name="Lawlor S."/>
            <person name="Leongamornlert D.A."/>
            <person name="Lloyd D.M."/>
            <person name="Loveland J."/>
            <person name="Lovell J."/>
            <person name="Lush M.J."/>
            <person name="Lyne R."/>
            <person name="Martin S."/>
            <person name="Mashreghi-Mohammadi M."/>
            <person name="Matthews L."/>
            <person name="Matthews N.S.W."/>
            <person name="McLaren S."/>
            <person name="Milne S."/>
            <person name="Mistry S."/>
            <person name="Moore M.J.F."/>
            <person name="Nickerson T."/>
            <person name="O'Dell C.N."/>
            <person name="Oliver K."/>
            <person name="Palmeiri A."/>
            <person name="Palmer S.A."/>
            <person name="Parker A."/>
            <person name="Patel D."/>
            <person name="Pearce A.V."/>
            <person name="Peck A.I."/>
            <person name="Pelan S."/>
            <person name="Phelps K."/>
            <person name="Phillimore B.J."/>
            <person name="Plumb R."/>
            <person name="Rajan J."/>
            <person name="Raymond C."/>
            <person name="Rouse G."/>
            <person name="Saenphimmachak C."/>
            <person name="Sehra H.K."/>
            <person name="Sheridan E."/>
            <person name="Shownkeen R."/>
            <person name="Sims S."/>
            <person name="Skuce C.D."/>
            <person name="Smith M."/>
            <person name="Steward C."/>
            <person name="Subramanian S."/>
            <person name="Sycamore N."/>
            <person name="Tracey A."/>
            <person name="Tromans A."/>
            <person name="Van Helmond Z."/>
            <person name="Wall M."/>
            <person name="Wallis J.M."/>
            <person name="White S."/>
            <person name="Whitehead S.L."/>
            <person name="Wilkinson J.E."/>
            <person name="Willey D.L."/>
            <person name="Williams H."/>
            <person name="Wilming L."/>
            <person name="Wray P.W."/>
            <person name="Wu Z."/>
            <person name="Coulson A."/>
            <person name="Vaudin M."/>
            <person name="Sulston J.E."/>
            <person name="Durbin R.M."/>
            <person name="Hubbard T."/>
            <person name="Wooster R."/>
            <person name="Dunham I."/>
            <person name="Carter N.P."/>
            <person name="McVean G."/>
            <person name="Ross M.T."/>
            <person name="Harrow J."/>
            <person name="Olson M.V."/>
            <person name="Beck S."/>
            <person name="Rogers J."/>
            <person name="Bentley D.R."/>
        </authorList>
    </citation>
    <scope>NUCLEOTIDE SEQUENCE [LARGE SCALE GENOMIC DNA]</scope>
</reference>
<reference key="8">
    <citation type="submission" date="2005-09" db="EMBL/GenBank/DDBJ databases">
        <authorList>
            <person name="Mural R.J."/>
            <person name="Istrail S."/>
            <person name="Sutton G.G."/>
            <person name="Florea L."/>
            <person name="Halpern A.L."/>
            <person name="Mobarry C.M."/>
            <person name="Lippert R."/>
            <person name="Walenz B."/>
            <person name="Shatkay H."/>
            <person name="Dew I."/>
            <person name="Miller J.R."/>
            <person name="Flanigan M.J."/>
            <person name="Edwards N.J."/>
            <person name="Bolanos R."/>
            <person name="Fasulo D."/>
            <person name="Halldorsson B.V."/>
            <person name="Hannenhalli S."/>
            <person name="Turner R."/>
            <person name="Yooseph S."/>
            <person name="Lu F."/>
            <person name="Nusskern D.R."/>
            <person name="Shue B.C."/>
            <person name="Zheng X.H."/>
            <person name="Zhong F."/>
            <person name="Delcher A.L."/>
            <person name="Huson D.H."/>
            <person name="Kravitz S.A."/>
            <person name="Mouchard L."/>
            <person name="Reinert K."/>
            <person name="Remington K.A."/>
            <person name="Clark A.G."/>
            <person name="Waterman M.S."/>
            <person name="Eichler E.E."/>
            <person name="Adams M.D."/>
            <person name="Hunkapiller M.W."/>
            <person name="Myers E.W."/>
            <person name="Venter J.C."/>
        </authorList>
    </citation>
    <scope>NUCLEOTIDE SEQUENCE [LARGE SCALE GENOMIC DNA]</scope>
</reference>
<reference key="9">
    <citation type="journal article" date="2004" name="Genome Res.">
        <title>The status, quality, and expansion of the NIH full-length cDNA project: the Mammalian Gene Collection (MGC).</title>
        <authorList>
            <consortium name="The MGC Project Team"/>
        </authorList>
    </citation>
    <scope>NUCLEOTIDE SEQUENCE [LARGE SCALE MRNA] (ISOFORM TAFII20)</scope>
    <source>
        <tissue>Lung</tissue>
    </source>
</reference>
<reference key="10">
    <citation type="journal article" date="1998" name="Cell">
        <title>Histone-like TAFs within the PCAF histone acetylase complex.</title>
        <authorList>
            <person name="Ogryzko V.V."/>
            <person name="Kotani T."/>
            <person name="Zhang X."/>
            <person name="Schiltz R.L."/>
            <person name="Howard T."/>
            <person name="Yang X.-J."/>
            <person name="Howard B.H."/>
            <person name="Qin J."/>
            <person name="Nakatani Y."/>
        </authorList>
    </citation>
    <scope>PROTEIN SEQUENCE OF 50-60 AND 115-122</scope>
    <scope>FUNCTION</scope>
    <scope>SUBUNIT</scope>
    <scope>SUBCELLULAR LOCATION</scope>
</reference>
<reference key="11">
    <citation type="journal article" date="1999" name="J. Biol. Chem.">
        <title>Identification of TATA-binding protein-free TAFII-containing complex subunits suggests a role in nucleosome acetylation and signal transduction.</title>
        <authorList>
            <person name="Brand M."/>
            <person name="Yamamoto K."/>
            <person name="Staub A."/>
            <person name="Tora L."/>
        </authorList>
    </citation>
    <scope>FUNCTION</scope>
    <scope>IDENTIFICATION IN THE TFTC-HAT COMPLEX WITH TAF5L; TAF6L; TADA3L; SUPT3H; TAF2; TAF5; TRRAP; TAF4; GCN5L2 AND TAF10</scope>
</reference>
<reference key="12">
    <citation type="journal article" date="2001" name="Mol. Cell. Biol.">
        <title>Human STAGA complex is a chromatin-acetylating transcription coactivator that interacts with pre-mRNA splicing and DNA damage-binding factors in vivo.</title>
        <authorList>
            <person name="Martinez E."/>
            <person name="Palhan V.B."/>
            <person name="Tjernberg A."/>
            <person name="Lymar E.S."/>
            <person name="Gamper A.M."/>
            <person name="Kundu T.K."/>
            <person name="Chait B.T."/>
            <person name="Roeder R.G."/>
        </authorList>
    </citation>
    <scope>FUNCTION</scope>
    <scope>SUBCELLULAR LOCATION</scope>
    <scope>IDENTIFICATION IN THE STAGA COMPLEX WITH SF3B3; GCN5L2; SUPT7L; TAF5L; TAF6L; TRRAP; TADA3L; TAF10 AND TAF9</scope>
    <scope>IDENTIFICATION BY MASS SPECTROMETRY</scope>
</reference>
<reference key="13">
    <citation type="journal article" date="1998" name="Mol. Cell">
        <title>The 400 kDa subunit of the PCAF histone acetylase complex belongs to the ATM superfamily.</title>
        <authorList>
            <person name="Vassilev A."/>
            <person name="Yamauchi J."/>
            <person name="Kotani T."/>
            <person name="Prives C."/>
            <person name="Avantaggiati M.L."/>
            <person name="Qin J."/>
            <person name="Nakatani Y."/>
        </authorList>
    </citation>
    <scope>FUNCTION</scope>
    <scope>IDENTIFICATION IN THE PCAF COMPLEX WITH TADA2L; TADA3L; TAF5L; SUPT3H; TAF6L; TAF10; TRRAP AND TAF9</scope>
</reference>
<reference key="14">
    <citation type="journal article" date="2005" name="Oncogene">
        <title>A functional interaction between ATF7 and TAF12 that is modulated by TAF4.</title>
        <authorList>
            <person name="Hamard P.J."/>
            <person name="Dalbies-Tran R."/>
            <person name="Hauss C."/>
            <person name="Davidson I."/>
            <person name="Kedinger C."/>
            <person name="Chatton B."/>
        </authorList>
    </citation>
    <scope>INTERACTION WITH ATF7</scope>
</reference>
<reference key="15">
    <citation type="journal article" date="2008" name="Mol. Cell">
        <title>Kinase-selective enrichment enables quantitative phosphoproteomics of the kinome across the cell cycle.</title>
        <authorList>
            <person name="Daub H."/>
            <person name="Olsen J.V."/>
            <person name="Bairlein M."/>
            <person name="Gnad F."/>
            <person name="Oppermann F.S."/>
            <person name="Korner R."/>
            <person name="Greff Z."/>
            <person name="Keri G."/>
            <person name="Stemmann O."/>
            <person name="Mann M."/>
        </authorList>
    </citation>
    <scope>PHOSPHORYLATION [LARGE SCALE ANALYSIS] AT SER-51 AND THR-59</scope>
    <scope>IDENTIFICATION BY MASS SPECTROMETRY [LARGE SCALE ANALYSIS]</scope>
    <source>
        <tissue>Cervix carcinoma</tissue>
    </source>
</reference>
<reference key="16">
    <citation type="journal article" date="2008" name="Proc. Natl. Acad. Sci. U.S.A.">
        <title>A quantitative atlas of mitotic phosphorylation.</title>
        <authorList>
            <person name="Dephoure N."/>
            <person name="Zhou C."/>
            <person name="Villen J."/>
            <person name="Beausoleil S.A."/>
            <person name="Bakalarski C.E."/>
            <person name="Elledge S.J."/>
            <person name="Gygi S.P."/>
        </authorList>
    </citation>
    <scope>PHOSPHORYLATION [LARGE SCALE ANALYSIS] AT THR-43 AND SER-51</scope>
    <scope>IDENTIFICATION BY MASS SPECTROMETRY [LARGE SCALE ANALYSIS]</scope>
    <source>
        <tissue>Cervix carcinoma</tissue>
    </source>
</reference>
<reference key="17">
    <citation type="journal article" date="2010" name="Sci. Signal.">
        <title>Quantitative phosphoproteomics reveals widespread full phosphorylation site occupancy during mitosis.</title>
        <authorList>
            <person name="Olsen J.V."/>
            <person name="Vermeulen M."/>
            <person name="Santamaria A."/>
            <person name="Kumar C."/>
            <person name="Miller M.L."/>
            <person name="Jensen L.J."/>
            <person name="Gnad F."/>
            <person name="Cox J."/>
            <person name="Jensen T.S."/>
            <person name="Nigg E.A."/>
            <person name="Brunak S."/>
            <person name="Mann M."/>
        </authorList>
    </citation>
    <scope>PHOSPHORYLATION [LARGE SCALE ANALYSIS] AT SER-51</scope>
    <scope>IDENTIFICATION BY MASS SPECTROMETRY [LARGE SCALE ANALYSIS]</scope>
    <source>
        <tissue>Cervix carcinoma</tissue>
    </source>
</reference>
<reference key="18">
    <citation type="journal article" date="2013" name="J. Proteome Res.">
        <title>Toward a comprehensive characterization of a human cancer cell phosphoproteome.</title>
        <authorList>
            <person name="Zhou H."/>
            <person name="Di Palma S."/>
            <person name="Preisinger C."/>
            <person name="Peng M."/>
            <person name="Polat A.N."/>
            <person name="Heck A.J."/>
            <person name="Mohammed S."/>
        </authorList>
    </citation>
    <scope>PHOSPHORYLATION [LARGE SCALE ANALYSIS] AT SER-51</scope>
    <scope>IDENTIFICATION BY MASS SPECTROMETRY [LARGE SCALE ANALYSIS]</scope>
    <source>
        <tissue>Cervix carcinoma</tissue>
        <tissue>Erythroleukemia</tissue>
    </source>
</reference>
<reference key="19">
    <citation type="journal article" date="2014" name="J. Proteomics">
        <title>An enzyme assisted RP-RPLC approach for in-depth analysis of human liver phosphoproteome.</title>
        <authorList>
            <person name="Bian Y."/>
            <person name="Song C."/>
            <person name="Cheng K."/>
            <person name="Dong M."/>
            <person name="Wang F."/>
            <person name="Huang J."/>
            <person name="Sun D."/>
            <person name="Wang L."/>
            <person name="Ye M."/>
            <person name="Zou H."/>
        </authorList>
    </citation>
    <scope>PHOSPHORYLATION [LARGE SCALE ANALYSIS] AT SER-51</scope>
    <scope>IDENTIFICATION BY MASS SPECTROMETRY [LARGE SCALE ANALYSIS]</scope>
    <source>
        <tissue>Liver</tissue>
    </source>
</reference>
<reference key="20">
    <citation type="journal article" date="2017" name="Nat. Struct. Mol. Biol.">
        <title>Site-specific mapping of the human SUMO proteome reveals co-modification with phosphorylation.</title>
        <authorList>
            <person name="Hendriks I.A."/>
            <person name="Lyon D."/>
            <person name="Young C."/>
            <person name="Jensen L.J."/>
            <person name="Vertegaal A.C."/>
            <person name="Nielsen M.L."/>
        </authorList>
    </citation>
    <scope>SUMOYLATION [LARGE SCALE ANALYSIS] AT LYS-19</scope>
    <scope>IDENTIFICATION BY MASS SPECTROMETRY [LARGE SCALE ANALYSIS]</scope>
</reference>
<reference key="21">
    <citation type="journal article" date="2000" name="Mol. Cell. Biol.">
        <title>The human TFIID components TAF(II)135 and TAF(II)20 and the yeast SAGA components ADA1 and TAF(II)68 heterodimerize to form histone-like pairs.</title>
        <authorList>
            <person name="Gangloff Y.-G."/>
            <person name="Werten S."/>
            <person name="Romier C."/>
            <person name="Carre L."/>
            <person name="Poch O."/>
            <person name="Moras D."/>
            <person name="Davidson I."/>
        </authorList>
    </citation>
    <scope>X-RAY CRYSTALLOGRAPHY (2.3 ANGSTROMS) OF 57-128 IN COMPLEX WITH TAF4</scope>
    <scope>MUTAGENESIS OF 87-ILE--PHE-91; 95-VAL-VAL-96 AND 99-ALA--ALA-103</scope>
</reference>
<reference evidence="16 17 18 19 20 21 22 23 24 25" key="22">
    <citation type="journal article" date="2021" name="Science">
        <title>Structural insights into preinitiation complex assembly on core promoters.</title>
        <authorList>
            <person name="Chen X."/>
            <person name="Qi Y."/>
            <person name="Wu Z."/>
            <person name="Wang X."/>
            <person name="Li J."/>
            <person name="Zhao D."/>
            <person name="Hou H."/>
            <person name="Li Y."/>
            <person name="Yu Z."/>
            <person name="Liu W."/>
            <person name="Wang M."/>
            <person name="Ren Y."/>
            <person name="Li Z."/>
            <person name="Yang H."/>
            <person name="Xu Y."/>
        </authorList>
    </citation>
    <scope>STRUCTURE BY ELECTRON MICROSCOPY (2.77 ANGSTROMS)</scope>
    <scope>FUNCTION</scope>
    <scope>IDENTIFICATION IN THE TFIID COMPLEX</scope>
    <scope>SUBUNIT</scope>
</reference>
<gene>
    <name evidence="15" type="primary">TAF12</name>
    <name type="synonym">TAF15</name>
    <name evidence="15" type="synonym">TAF2J</name>
    <name evidence="15" type="synonym">TAFII20</name>
</gene>
<evidence type="ECO:0000255" key="1"/>
<evidence type="ECO:0000256" key="2">
    <source>
        <dbReference type="SAM" id="MobiDB-lite"/>
    </source>
</evidence>
<evidence type="ECO:0000269" key="3">
    <source>
    </source>
</evidence>
<evidence type="ECO:0000269" key="4">
    <source>
    </source>
</evidence>
<evidence type="ECO:0000269" key="5">
    <source>
    </source>
</evidence>
<evidence type="ECO:0000269" key="6">
    <source>
    </source>
</evidence>
<evidence type="ECO:0000269" key="7">
    <source>
    </source>
</evidence>
<evidence type="ECO:0000269" key="8">
    <source>
    </source>
</evidence>
<evidence type="ECO:0000269" key="9">
    <source>
    </source>
</evidence>
<evidence type="ECO:0000269" key="10">
    <source>
    </source>
</evidence>
<evidence type="ECO:0000269" key="11">
    <source>
    </source>
</evidence>
<evidence type="ECO:0000269" key="12">
    <source>
    </source>
</evidence>
<evidence type="ECO:0000303" key="13">
    <source>
    </source>
</evidence>
<evidence type="ECO:0000305" key="14"/>
<evidence type="ECO:0000312" key="15">
    <source>
        <dbReference type="HGNC" id="HGNC:11545"/>
    </source>
</evidence>
<evidence type="ECO:0007744" key="16">
    <source>
        <dbReference type="PDB" id="7EDX"/>
    </source>
</evidence>
<evidence type="ECO:0007744" key="17">
    <source>
        <dbReference type="PDB" id="7EG7"/>
    </source>
</evidence>
<evidence type="ECO:0007744" key="18">
    <source>
        <dbReference type="PDB" id="7EG8"/>
    </source>
</evidence>
<evidence type="ECO:0007744" key="19">
    <source>
        <dbReference type="PDB" id="7EG9"/>
    </source>
</evidence>
<evidence type="ECO:0007744" key="20">
    <source>
        <dbReference type="PDB" id="7EGA"/>
    </source>
</evidence>
<evidence type="ECO:0007744" key="21">
    <source>
        <dbReference type="PDB" id="7EGB"/>
    </source>
</evidence>
<evidence type="ECO:0007744" key="22">
    <source>
        <dbReference type="PDB" id="7EGC"/>
    </source>
</evidence>
<evidence type="ECO:0007744" key="23">
    <source>
        <dbReference type="PDB" id="7EGD"/>
    </source>
</evidence>
<evidence type="ECO:0007744" key="24">
    <source>
        <dbReference type="PDB" id="7EGE"/>
    </source>
</evidence>
<evidence type="ECO:0007744" key="25">
    <source>
        <dbReference type="PDB" id="7EGF"/>
    </source>
</evidence>
<evidence type="ECO:0007744" key="26">
    <source>
    </source>
</evidence>
<evidence type="ECO:0007744" key="27">
    <source>
    </source>
</evidence>
<evidence type="ECO:0007744" key="28">
    <source>
    </source>
</evidence>
<evidence type="ECO:0007744" key="29">
    <source>
    </source>
</evidence>
<evidence type="ECO:0007744" key="30">
    <source>
    </source>
</evidence>
<evidence type="ECO:0007744" key="31">
    <source>
    </source>
</evidence>
<evidence type="ECO:0007829" key="32">
    <source>
        <dbReference type="PDB" id="1H3O"/>
    </source>
</evidence>
<evidence type="ECO:0007829" key="33">
    <source>
        <dbReference type="PDB" id="7EGG"/>
    </source>
</evidence>
<evidence type="ECO:0007829" key="34">
    <source>
        <dbReference type="PDB" id="7KTR"/>
    </source>
</evidence>
<proteinExistence type="evidence at protein level"/>
<keyword id="KW-0002">3D-structure</keyword>
<keyword id="KW-0024">Alternative initiation</keyword>
<keyword id="KW-0903">Direct protein sequencing</keyword>
<keyword id="KW-1017">Isopeptide bond</keyword>
<keyword id="KW-0539">Nucleus</keyword>
<keyword id="KW-0597">Phosphoprotein</keyword>
<keyword id="KW-1267">Proteomics identification</keyword>
<keyword id="KW-1185">Reference proteome</keyword>
<keyword id="KW-0804">Transcription</keyword>
<keyword id="KW-0805">Transcription regulation</keyword>
<keyword id="KW-0832">Ubl conjugation</keyword>
<dbReference type="EMBL" id="U57693">
    <property type="protein sequence ID" value="AAC50600.1"/>
    <property type="molecule type" value="mRNA"/>
</dbReference>
<dbReference type="EMBL" id="U57693">
    <property type="protein sequence ID" value="AAC50601.1"/>
    <property type="molecule type" value="mRNA"/>
</dbReference>
<dbReference type="EMBL" id="D50544">
    <property type="protein sequence ID" value="BAA09112.1"/>
    <property type="molecule type" value="mRNA"/>
</dbReference>
<dbReference type="EMBL" id="X84002">
    <property type="protein sequence ID" value="CAA58826.1"/>
    <property type="molecule type" value="mRNA"/>
</dbReference>
<dbReference type="EMBL" id="BT007031">
    <property type="protein sequence ID" value="AAP35678.1"/>
    <property type="molecule type" value="mRNA"/>
</dbReference>
<dbReference type="EMBL" id="AY206865">
    <property type="protein sequence ID" value="AAO13491.1"/>
    <property type="molecule type" value="Genomic_DNA"/>
</dbReference>
<dbReference type="EMBL" id="AL513497">
    <property type="status" value="NOT_ANNOTATED_CDS"/>
    <property type="molecule type" value="Genomic_DNA"/>
</dbReference>
<dbReference type="EMBL" id="CH471059">
    <property type="protein sequence ID" value="EAX07682.1"/>
    <property type="molecule type" value="Genomic_DNA"/>
</dbReference>
<dbReference type="EMBL" id="CH471059">
    <property type="protein sequence ID" value="EAX07683.1"/>
    <property type="molecule type" value="Genomic_DNA"/>
</dbReference>
<dbReference type="EMBL" id="BC011986">
    <property type="protein sequence ID" value="AAH11986.1"/>
    <property type="molecule type" value="mRNA"/>
</dbReference>
<dbReference type="CCDS" id="CCDS326.1">
    <molecule id="Q16514-1"/>
</dbReference>
<dbReference type="PIR" id="JC4676">
    <property type="entry name" value="JC4676"/>
</dbReference>
<dbReference type="RefSeq" id="NP_001128690.1">
    <molecule id="Q16514-1"/>
    <property type="nucleotide sequence ID" value="NM_001135218.2"/>
</dbReference>
<dbReference type="RefSeq" id="NP_005635.1">
    <molecule id="Q16514-1"/>
    <property type="nucleotide sequence ID" value="NM_005644.4"/>
</dbReference>
<dbReference type="RefSeq" id="XP_024305136.1">
    <molecule id="Q16514-1"/>
    <property type="nucleotide sequence ID" value="XM_024449368.2"/>
</dbReference>
<dbReference type="PDB" id="1H3O">
    <property type="method" value="X-ray"/>
    <property type="resolution" value="2.30 A"/>
    <property type="chains" value="B/D=57-128"/>
</dbReference>
<dbReference type="PDB" id="6MZC">
    <property type="method" value="EM"/>
    <property type="resolution" value="4.50 A"/>
    <property type="chains" value="R=1-161"/>
</dbReference>
<dbReference type="PDB" id="6MZD">
    <property type="method" value="EM"/>
    <property type="resolution" value="9.80 A"/>
    <property type="chains" value="Q=1-161"/>
</dbReference>
<dbReference type="PDB" id="6MZL">
    <property type="method" value="EM"/>
    <property type="resolution" value="23.00 A"/>
    <property type="chains" value="Q/R=1-161"/>
</dbReference>
<dbReference type="PDB" id="6MZM">
    <property type="method" value="EM"/>
    <property type="resolution" value="7.50 A"/>
    <property type="chains" value="R=1-161"/>
</dbReference>
<dbReference type="PDB" id="7EDX">
    <property type="method" value="EM"/>
    <property type="resolution" value="4.50 A"/>
    <property type="chains" value="L/l=1-161"/>
</dbReference>
<dbReference type="PDB" id="7EG7">
    <property type="method" value="EM"/>
    <property type="resolution" value="6.20 A"/>
    <property type="chains" value="L/l=1-161"/>
</dbReference>
<dbReference type="PDB" id="7EG8">
    <property type="method" value="EM"/>
    <property type="resolution" value="7.40 A"/>
    <property type="chains" value="L/l=1-161"/>
</dbReference>
<dbReference type="PDB" id="7EG9">
    <property type="method" value="EM"/>
    <property type="resolution" value="3.70 A"/>
    <property type="chains" value="L/l=1-161"/>
</dbReference>
<dbReference type="PDB" id="7EGA">
    <property type="method" value="EM"/>
    <property type="resolution" value="4.10 A"/>
    <property type="chains" value="L/l=1-161"/>
</dbReference>
<dbReference type="PDB" id="7EGB">
    <property type="method" value="EM"/>
    <property type="resolution" value="3.30 A"/>
    <property type="chains" value="L/l=1-161"/>
</dbReference>
<dbReference type="PDB" id="7EGC">
    <property type="method" value="EM"/>
    <property type="resolution" value="3.90 A"/>
    <property type="chains" value="L/l=1-161"/>
</dbReference>
<dbReference type="PDB" id="7EGD">
    <property type="method" value="EM"/>
    <property type="resolution" value="6.75 A"/>
    <property type="chains" value="L/l=1-161"/>
</dbReference>
<dbReference type="PDB" id="7EGE">
    <property type="method" value="EM"/>
    <property type="resolution" value="9.00 A"/>
    <property type="chains" value="L/l=1-161"/>
</dbReference>
<dbReference type="PDB" id="7EGF">
    <property type="method" value="EM"/>
    <property type="resolution" value="3.16 A"/>
    <property type="chains" value="l=1-161"/>
</dbReference>
<dbReference type="PDB" id="7EGG">
    <property type="method" value="EM"/>
    <property type="resolution" value="2.77 A"/>
    <property type="chains" value="L=1-161"/>
</dbReference>
<dbReference type="PDB" id="7EGI">
    <property type="method" value="EM"/>
    <property type="resolution" value="9.82 A"/>
    <property type="chains" value="L/l=1-161"/>
</dbReference>
<dbReference type="PDB" id="7EGJ">
    <property type="method" value="EM"/>
    <property type="resolution" value="8.64 A"/>
    <property type="chains" value="L/l=1-161"/>
</dbReference>
<dbReference type="PDB" id="7ENA">
    <property type="method" value="EM"/>
    <property type="resolution" value="4.07 A"/>
    <property type="chains" value="DL/Dl=1-161"/>
</dbReference>
<dbReference type="PDB" id="7ENC">
    <property type="method" value="EM"/>
    <property type="resolution" value="4.13 A"/>
    <property type="chains" value="DL/Dl=1-161"/>
</dbReference>
<dbReference type="PDB" id="7KTR">
    <property type="method" value="EM"/>
    <property type="resolution" value="2.93 A"/>
    <property type="chains" value="G=1-161"/>
</dbReference>
<dbReference type="PDB" id="7KTS">
    <property type="method" value="EM"/>
    <property type="resolution" value="19.09 A"/>
    <property type="chains" value="G=1-161"/>
</dbReference>
<dbReference type="PDB" id="8GXQ">
    <property type="method" value="EM"/>
    <property type="resolution" value="5.04 A"/>
    <property type="chains" value="DL/Dl=1-161"/>
</dbReference>
<dbReference type="PDB" id="8GXS">
    <property type="method" value="EM"/>
    <property type="resolution" value="4.16 A"/>
    <property type="chains" value="DL/Dl=1-161"/>
</dbReference>
<dbReference type="PDB" id="8H7G">
    <property type="method" value="EM"/>
    <property type="resolution" value="3.70 A"/>
    <property type="chains" value="R=1-161"/>
</dbReference>
<dbReference type="PDB" id="8WAK">
    <property type="method" value="EM"/>
    <property type="resolution" value="5.47 A"/>
    <property type="chains" value="L/l=1-161"/>
</dbReference>
<dbReference type="PDB" id="8WAL">
    <property type="method" value="EM"/>
    <property type="resolution" value="8.52 A"/>
    <property type="chains" value="L/l=1-161"/>
</dbReference>
<dbReference type="PDB" id="8WAN">
    <property type="method" value="EM"/>
    <property type="resolution" value="6.07 A"/>
    <property type="chains" value="L/l=1-161"/>
</dbReference>
<dbReference type="PDB" id="8WAO">
    <property type="method" value="EM"/>
    <property type="resolution" value="6.40 A"/>
    <property type="chains" value="L/l=1-161"/>
</dbReference>
<dbReference type="PDB" id="8WAP">
    <property type="method" value="EM"/>
    <property type="resolution" value="5.85 A"/>
    <property type="chains" value="L/l=1-161"/>
</dbReference>
<dbReference type="PDB" id="8WAQ">
    <property type="method" value="EM"/>
    <property type="resolution" value="6.29 A"/>
    <property type="chains" value="L/l=1-161"/>
</dbReference>
<dbReference type="PDB" id="8WAR">
    <property type="method" value="EM"/>
    <property type="resolution" value="7.20 A"/>
    <property type="chains" value="L/l=1-161"/>
</dbReference>
<dbReference type="PDB" id="8WAS">
    <property type="method" value="EM"/>
    <property type="resolution" value="6.13 A"/>
    <property type="chains" value="L/l=1-161"/>
</dbReference>
<dbReference type="PDBsum" id="1H3O"/>
<dbReference type="PDBsum" id="6MZC"/>
<dbReference type="PDBsum" id="6MZD"/>
<dbReference type="PDBsum" id="6MZL"/>
<dbReference type="PDBsum" id="6MZM"/>
<dbReference type="PDBsum" id="7EDX"/>
<dbReference type="PDBsum" id="7EG7"/>
<dbReference type="PDBsum" id="7EG8"/>
<dbReference type="PDBsum" id="7EG9"/>
<dbReference type="PDBsum" id="7EGA"/>
<dbReference type="PDBsum" id="7EGB"/>
<dbReference type="PDBsum" id="7EGC"/>
<dbReference type="PDBsum" id="7EGD"/>
<dbReference type="PDBsum" id="7EGE"/>
<dbReference type="PDBsum" id="7EGF"/>
<dbReference type="PDBsum" id="7EGG"/>
<dbReference type="PDBsum" id="7EGI"/>
<dbReference type="PDBsum" id="7EGJ"/>
<dbReference type="PDBsum" id="7ENA"/>
<dbReference type="PDBsum" id="7ENC"/>
<dbReference type="PDBsum" id="7KTR"/>
<dbReference type="PDBsum" id="7KTS"/>
<dbReference type="PDBsum" id="8GXQ"/>
<dbReference type="PDBsum" id="8GXS"/>
<dbReference type="PDBsum" id="8H7G"/>
<dbReference type="PDBsum" id="8WAK"/>
<dbReference type="PDBsum" id="8WAL"/>
<dbReference type="PDBsum" id="8WAN"/>
<dbReference type="PDBsum" id="8WAO"/>
<dbReference type="PDBsum" id="8WAP"/>
<dbReference type="PDBsum" id="8WAQ"/>
<dbReference type="PDBsum" id="8WAR"/>
<dbReference type="PDBsum" id="8WAS"/>
<dbReference type="EMDB" id="EMD-23027"/>
<dbReference type="EMDB" id="EMD-23028"/>
<dbReference type="EMDB" id="EMD-31075"/>
<dbReference type="EMDB" id="EMD-31107"/>
<dbReference type="EMDB" id="EMD-31108"/>
<dbReference type="EMDB" id="EMD-31109"/>
<dbReference type="EMDB" id="EMD-31110"/>
<dbReference type="EMDB" id="EMD-31111"/>
<dbReference type="EMDB" id="EMD-31112"/>
<dbReference type="EMDB" id="EMD-31113"/>
<dbReference type="EMDB" id="EMD-31114"/>
<dbReference type="EMDB" id="EMD-31115"/>
<dbReference type="EMDB" id="EMD-31116"/>
<dbReference type="EMDB" id="EMD-31118"/>
<dbReference type="EMDB" id="EMD-31119"/>
<dbReference type="EMDB" id="EMD-31204"/>
<dbReference type="EMDB" id="EMD-31207"/>
<dbReference type="EMDB" id="EMD-34359"/>
<dbReference type="EMDB" id="EMD-34360"/>
<dbReference type="EMDB" id="EMD-34520"/>
<dbReference type="EMDB" id="EMD-37395"/>
<dbReference type="EMDB" id="EMD-37396"/>
<dbReference type="EMDB" id="EMD-37398"/>
<dbReference type="EMDB" id="EMD-37399"/>
<dbReference type="EMDB" id="EMD-37400"/>
<dbReference type="EMDB" id="EMD-37401"/>
<dbReference type="EMDB" id="EMD-37402"/>
<dbReference type="EMDB" id="EMD-37403"/>
<dbReference type="EMDB" id="EMD-9298"/>
<dbReference type="EMDB" id="EMD-9302"/>
<dbReference type="EMDB" id="EMD-9305"/>
<dbReference type="EMDB" id="EMD-9306"/>
<dbReference type="SMR" id="Q16514"/>
<dbReference type="BioGRID" id="112746">
    <property type="interactions" value="108"/>
</dbReference>
<dbReference type="ComplexPortal" id="CPX-6802">
    <property type="entry name" value="SAGA complex, KAT2B variant"/>
</dbReference>
<dbReference type="ComplexPortal" id="CPX-900">
    <property type="entry name" value="SAGA complex, KAT2A variant"/>
</dbReference>
<dbReference type="ComplexPortal" id="CPX-903">
    <property type="entry name" value="TFTC histone acetylation complex"/>
</dbReference>
<dbReference type="ComplexPortal" id="CPX-915">
    <property type="entry name" value="General transcription factor complex TFIID"/>
</dbReference>
<dbReference type="ComplexPortal" id="CPX-930">
    <property type="entry name" value="General transcription factor complex TFIID, TAF4B variant"/>
</dbReference>
<dbReference type="ComplexPortal" id="CPX-989">
    <property type="entry name" value="PCAF histone acetylase complex"/>
</dbReference>
<dbReference type="CORUM" id="Q16514"/>
<dbReference type="DIP" id="DIP-496N"/>
<dbReference type="FunCoup" id="Q16514">
    <property type="interactions" value="2614"/>
</dbReference>
<dbReference type="IntAct" id="Q16514">
    <property type="interactions" value="100"/>
</dbReference>
<dbReference type="MINT" id="Q16514"/>
<dbReference type="STRING" id="9606.ENSP00000263974"/>
<dbReference type="GlyGen" id="Q16514">
    <property type="glycosylation" value="2 sites, 1 O-linked glycan (2 sites)"/>
</dbReference>
<dbReference type="iPTMnet" id="Q16514"/>
<dbReference type="PhosphoSitePlus" id="Q16514"/>
<dbReference type="BioMuta" id="TAF12"/>
<dbReference type="DMDM" id="3024708"/>
<dbReference type="jPOST" id="Q16514"/>
<dbReference type="MassIVE" id="Q16514"/>
<dbReference type="PaxDb" id="9606-ENSP00000263974"/>
<dbReference type="PeptideAtlas" id="Q16514"/>
<dbReference type="ProteomicsDB" id="60885">
    <molecule id="Q16514-1"/>
</dbReference>
<dbReference type="ProteomicsDB" id="60886">
    <molecule id="Q16514-2"/>
</dbReference>
<dbReference type="Pumba" id="Q16514"/>
<dbReference type="Antibodypedia" id="1777">
    <property type="antibodies" value="207 antibodies from 27 providers"/>
</dbReference>
<dbReference type="DNASU" id="6883"/>
<dbReference type="Ensembl" id="ENST00000263974.4">
    <molecule id="Q16514-1"/>
    <property type="protein sequence ID" value="ENSP00000263974.4"/>
    <property type="gene ID" value="ENSG00000120656.14"/>
</dbReference>
<dbReference type="Ensembl" id="ENST00000373824.9">
    <molecule id="Q16514-1"/>
    <property type="protein sequence ID" value="ENSP00000362930.4"/>
    <property type="gene ID" value="ENSG00000120656.14"/>
</dbReference>
<dbReference type="Ensembl" id="ENST00000685312.1">
    <molecule id="Q16514-1"/>
    <property type="protein sequence ID" value="ENSP00000509153.1"/>
    <property type="gene ID" value="ENSG00000120656.14"/>
</dbReference>
<dbReference type="Ensembl" id="ENST00000689843.1">
    <molecule id="Q16514-1"/>
    <property type="protein sequence ID" value="ENSP00000509370.1"/>
    <property type="gene ID" value="ENSG00000120656.14"/>
</dbReference>
<dbReference type="Ensembl" id="ENST00000692098.1">
    <molecule id="Q16514-1"/>
    <property type="protein sequence ID" value="ENSP00000509051.1"/>
    <property type="gene ID" value="ENSG00000120656.14"/>
</dbReference>
<dbReference type="GeneID" id="6883"/>
<dbReference type="KEGG" id="hsa:6883"/>
<dbReference type="MANE-Select" id="ENST00000373824.9">
    <property type="protein sequence ID" value="ENSP00000362930.4"/>
    <property type="RefSeq nucleotide sequence ID" value="NM_005644.4"/>
    <property type="RefSeq protein sequence ID" value="NP_005635.1"/>
</dbReference>
<dbReference type="UCSC" id="uc001bqx.5">
    <molecule id="Q16514-1"/>
    <property type="organism name" value="human"/>
</dbReference>
<dbReference type="AGR" id="HGNC:11545"/>
<dbReference type="CTD" id="6883"/>
<dbReference type="DisGeNET" id="6883"/>
<dbReference type="GeneCards" id="TAF12"/>
<dbReference type="HGNC" id="HGNC:11545">
    <property type="gene designation" value="TAF12"/>
</dbReference>
<dbReference type="HPA" id="ENSG00000120656">
    <property type="expression patterns" value="Low tissue specificity"/>
</dbReference>
<dbReference type="MIM" id="600773">
    <property type="type" value="gene"/>
</dbReference>
<dbReference type="neXtProt" id="NX_Q16514"/>
<dbReference type="OpenTargets" id="ENSG00000120656"/>
<dbReference type="PharmGKB" id="PA36320"/>
<dbReference type="VEuPathDB" id="HostDB:ENSG00000120656"/>
<dbReference type="eggNOG" id="KOG1142">
    <property type="taxonomic scope" value="Eukaryota"/>
</dbReference>
<dbReference type="GeneTree" id="ENSGT00390000002144"/>
<dbReference type="HOGENOM" id="CLU_093619_3_1_1"/>
<dbReference type="InParanoid" id="Q16514"/>
<dbReference type="OMA" id="IAPVCKT"/>
<dbReference type="OrthoDB" id="2193432at2759"/>
<dbReference type="PAN-GO" id="Q16514">
    <property type="GO annotations" value="4 GO annotations based on evolutionary models"/>
</dbReference>
<dbReference type="PhylomeDB" id="Q16514"/>
<dbReference type="TreeFam" id="TF323652"/>
<dbReference type="PathwayCommons" id="Q16514"/>
<dbReference type="Reactome" id="R-HSA-167161">
    <property type="pathway name" value="HIV Transcription Initiation"/>
</dbReference>
<dbReference type="Reactome" id="R-HSA-167162">
    <property type="pathway name" value="RNA Polymerase II HIV Promoter Escape"/>
</dbReference>
<dbReference type="Reactome" id="R-HSA-167172">
    <property type="pathway name" value="Transcription of the HIV genome"/>
</dbReference>
<dbReference type="Reactome" id="R-HSA-3214847">
    <property type="pathway name" value="HATs acetylate histones"/>
</dbReference>
<dbReference type="Reactome" id="R-HSA-674695">
    <property type="pathway name" value="RNA Polymerase II Pre-transcription Events"/>
</dbReference>
<dbReference type="Reactome" id="R-HSA-6804756">
    <property type="pathway name" value="Regulation of TP53 Activity through Phosphorylation"/>
</dbReference>
<dbReference type="Reactome" id="R-HSA-73776">
    <property type="pathway name" value="RNA Polymerase II Promoter Escape"/>
</dbReference>
<dbReference type="Reactome" id="R-HSA-73779">
    <property type="pathway name" value="RNA Polymerase II Transcription Pre-Initiation And Promoter Opening"/>
</dbReference>
<dbReference type="Reactome" id="R-HSA-75953">
    <property type="pathway name" value="RNA Polymerase II Transcription Initiation"/>
</dbReference>
<dbReference type="Reactome" id="R-HSA-76042">
    <property type="pathway name" value="RNA Polymerase II Transcription Initiation And Promoter Clearance"/>
</dbReference>
<dbReference type="SignaLink" id="Q16514"/>
<dbReference type="SIGNOR" id="Q16514"/>
<dbReference type="BioGRID-ORCS" id="6883">
    <property type="hits" value="448 hits in 1160 CRISPR screens"/>
</dbReference>
<dbReference type="ChiTaRS" id="TAF12">
    <property type="organism name" value="human"/>
</dbReference>
<dbReference type="EvolutionaryTrace" id="Q16514"/>
<dbReference type="GeneWiki" id="TAF12"/>
<dbReference type="GenomeRNAi" id="6883"/>
<dbReference type="Pharos" id="Q16514">
    <property type="development level" value="Tbio"/>
</dbReference>
<dbReference type="PRO" id="PR:Q16514"/>
<dbReference type="Proteomes" id="UP000005640">
    <property type="component" value="Chromosome 1"/>
</dbReference>
<dbReference type="RNAct" id="Q16514">
    <property type="molecule type" value="protein"/>
</dbReference>
<dbReference type="Bgee" id="ENSG00000120656">
    <property type="expression patterns" value="Expressed in oocyte and 175 other cell types or tissues"/>
</dbReference>
<dbReference type="GO" id="GO:0005654">
    <property type="term" value="C:nucleoplasm"/>
    <property type="evidence" value="ECO:0000304"/>
    <property type="project" value="Reactome"/>
</dbReference>
<dbReference type="GO" id="GO:0005634">
    <property type="term" value="C:nucleus"/>
    <property type="evidence" value="ECO:0000314"/>
    <property type="project" value="UniProtKB"/>
</dbReference>
<dbReference type="GO" id="GO:0000124">
    <property type="term" value="C:SAGA complex"/>
    <property type="evidence" value="ECO:0000314"/>
    <property type="project" value="UniProtKB"/>
</dbReference>
<dbReference type="GO" id="GO:0005669">
    <property type="term" value="C:transcription factor TFIID complex"/>
    <property type="evidence" value="ECO:0000314"/>
    <property type="project" value="MGI"/>
</dbReference>
<dbReference type="GO" id="GO:0033276">
    <property type="term" value="C:transcription factor TFTC complex"/>
    <property type="evidence" value="ECO:0000314"/>
    <property type="project" value="UniProtKB"/>
</dbReference>
<dbReference type="GO" id="GO:0003677">
    <property type="term" value="F:DNA binding"/>
    <property type="evidence" value="ECO:0000314"/>
    <property type="project" value="UniProtKB"/>
</dbReference>
<dbReference type="GO" id="GO:0140297">
    <property type="term" value="F:DNA-binding transcription factor binding"/>
    <property type="evidence" value="ECO:0000314"/>
    <property type="project" value="UniProtKB"/>
</dbReference>
<dbReference type="GO" id="GO:0046982">
    <property type="term" value="F:protein heterodimerization activity"/>
    <property type="evidence" value="ECO:0007669"/>
    <property type="project" value="InterPro"/>
</dbReference>
<dbReference type="GO" id="GO:0017025">
    <property type="term" value="F:TBP-class protein binding"/>
    <property type="evidence" value="ECO:0000318"/>
    <property type="project" value="GO_Central"/>
</dbReference>
<dbReference type="GO" id="GO:0003713">
    <property type="term" value="F:transcription coactivator activity"/>
    <property type="evidence" value="ECO:0000314"/>
    <property type="project" value="UniProtKB"/>
</dbReference>
<dbReference type="GO" id="GO:0006352">
    <property type="term" value="P:DNA-templated transcription initiation"/>
    <property type="evidence" value="ECO:0000314"/>
    <property type="project" value="UniProtKB"/>
</dbReference>
<dbReference type="GO" id="GO:0042789">
    <property type="term" value="P:mRNA transcription by RNA polymerase II"/>
    <property type="evidence" value="ECO:0000314"/>
    <property type="project" value="ComplexPortal"/>
</dbReference>
<dbReference type="GO" id="GO:0045893">
    <property type="term" value="P:positive regulation of DNA-templated transcription"/>
    <property type="evidence" value="ECO:0000303"/>
    <property type="project" value="ComplexPortal"/>
</dbReference>
<dbReference type="GO" id="GO:0045944">
    <property type="term" value="P:positive regulation of transcription by RNA polymerase II"/>
    <property type="evidence" value="ECO:0000314"/>
    <property type="project" value="UniProtKB"/>
</dbReference>
<dbReference type="GO" id="GO:0060261">
    <property type="term" value="P:positive regulation of transcription initiation by RNA polymerase II"/>
    <property type="evidence" value="ECO:0000314"/>
    <property type="project" value="ComplexPortal"/>
</dbReference>
<dbReference type="GO" id="GO:0006282">
    <property type="term" value="P:regulation of DNA repair"/>
    <property type="evidence" value="ECO:0000303"/>
    <property type="project" value="ComplexPortal"/>
</dbReference>
<dbReference type="GO" id="GO:0006355">
    <property type="term" value="P:regulation of DNA-templated transcription"/>
    <property type="evidence" value="ECO:0000303"/>
    <property type="project" value="ComplexPortal"/>
</dbReference>
<dbReference type="GO" id="GO:0043484">
    <property type="term" value="P:regulation of RNA splicing"/>
    <property type="evidence" value="ECO:0000303"/>
    <property type="project" value="ComplexPortal"/>
</dbReference>
<dbReference type="GO" id="GO:0006357">
    <property type="term" value="P:regulation of transcription by RNA polymerase II"/>
    <property type="evidence" value="ECO:0000314"/>
    <property type="project" value="ComplexPortal"/>
</dbReference>
<dbReference type="GO" id="GO:0051123">
    <property type="term" value="P:RNA polymerase II preinitiation complex assembly"/>
    <property type="evidence" value="ECO:0000353"/>
    <property type="project" value="ComplexPortal"/>
</dbReference>
<dbReference type="GO" id="GO:0006366">
    <property type="term" value="P:transcription by RNA polymerase II"/>
    <property type="evidence" value="ECO:0000304"/>
    <property type="project" value="ProtInc"/>
</dbReference>
<dbReference type="GO" id="GO:0006367">
    <property type="term" value="P:transcription initiation at RNA polymerase II promoter"/>
    <property type="evidence" value="ECO:0000314"/>
    <property type="project" value="UniProtKB"/>
</dbReference>
<dbReference type="CDD" id="cd07981">
    <property type="entry name" value="HFD_TAF12"/>
    <property type="match status" value="1"/>
</dbReference>
<dbReference type="FunFam" id="1.10.20.10:FF:000011">
    <property type="entry name" value="Transcription initiation factor TFIID subunit 12"/>
    <property type="match status" value="1"/>
</dbReference>
<dbReference type="Gene3D" id="1.10.20.10">
    <property type="entry name" value="Histone, subunit A"/>
    <property type="match status" value="1"/>
</dbReference>
<dbReference type="IDEAL" id="IID00248"/>
<dbReference type="InterPro" id="IPR009072">
    <property type="entry name" value="Histone-fold"/>
</dbReference>
<dbReference type="InterPro" id="IPR037794">
    <property type="entry name" value="TAF12"/>
</dbReference>
<dbReference type="InterPro" id="IPR003228">
    <property type="entry name" value="TFIID_TAF12_dom"/>
</dbReference>
<dbReference type="PANTHER" id="PTHR12264">
    <property type="entry name" value="TRANSCRIPTION INITIATION FACTOR TFIID SUBUNIT 12"/>
    <property type="match status" value="1"/>
</dbReference>
<dbReference type="PANTHER" id="PTHR12264:SF21">
    <property type="entry name" value="TRANSCRIPTION INITIATION FACTOR TFIID SUBUNIT 12"/>
    <property type="match status" value="1"/>
</dbReference>
<dbReference type="Pfam" id="PF03847">
    <property type="entry name" value="TFIID_20kDa"/>
    <property type="match status" value="1"/>
</dbReference>
<dbReference type="SUPFAM" id="SSF47113">
    <property type="entry name" value="Histone-fold"/>
    <property type="match status" value="1"/>
</dbReference>
<sequence>MNQFGPSALINLSNFSSIKPEPASTPPQGSMANSTAVVKIPGTPGAGGRLSPENNQVLTKKKLQDLVREVDPNEQLDEDVEEMLLQIADDFIESVVTAACQLARHRKSSTLEVKDVQLHLERQWNMWIPGFGSEEIRPYKKACTTEAHKQRMALIRKTTKK</sequence>
<comment type="function">
    <text evidence="3 7 8 9 10 11 12">The TFIID basal transcription factor complex plays a major role in the initiation of RNA polymerase II (Pol II)-dependent transcription (PubMed:33795473). TFIID recognizes and binds promoters with or without a TATA box via its subunit TBP, a TATA-box-binding protein, and promotes assembly of the pre-initiation complex (PIC) (PubMed:33795473). The TFIID complex consists of TBP and TBP-associated factors (TAFs), including TAF1, TAF2, TAF3, TAF4, TAF5, TAF6, TAF7, TAF8, TAF9, TAF10, TAF11, TAF12 and TAF13 (PubMed:33795473). Component of the TATA-binding protein-free TAF complex (TFTC), the PCAF histone acetylase complex and the STAGA transcription coactivator-HAT complex (PubMed:10373431, PubMed:7729427, PubMed:8598932, PubMed:8663456, PubMed:9674425, PubMed:9885574).</text>
</comment>
<comment type="subunit">
    <text evidence="3 4 5 6 7 12">Component of the TFIID basal transcription factor complex, composed of TATA-box-binding protein TBP, and a number of TBP-associated factors (TAFs), including TAF1, TAF2, TAF3, TAF4, TAF5, TAF6, TAF7, TAF8, TAF9, TAF10, TAF11, TAF12 and TAF13 (PubMed:33795473). Component of the TATA-binding protein-free TAF complex (TFTC), the PCAF histone acetylase complex and the STAGA transcription coactivator-HAT complex (PubMed:10373431, PubMed:10594036, PubMed:11564863, PubMed:9885574). Component of the PCAF complex, at least composed of TADA2L/ADA2, TADA3L/ADA3, TAF5L/PAF65-beta, SUPT3H, TAF6L, TAF9, TAF10, TAF12 and TRRAP (PubMed:9885574). Component of the STAGA transcription coactivator-HAT complex, at least composed of SUPT3H, GCN5L2, TAF5L, TAF6L, STAF65-gamma/SUPT7L, TADA3L, TAD1L, TAF10, TAF12, TRRAP and TAF9 (PubMed:10594036, PubMed:11564863). Interacts with ATF7 (via the transactivation domain); the interaction is prevented by sumoylation of ATF7 (PubMed:15735663).</text>
</comment>
<comment type="subunit">
    <molecule>Isoform TAFII20</molecule>
    <text evidence="6 8">Interacts with TBP; the interaction is direct (PubMed:7729427). Interacts with TAF10; the interaction is direct (PubMed:7729427). Interacts with ATF7, promoting transactivation by ATF7 (PubMed:15735663).</text>
</comment>
<comment type="subunit">
    <molecule>Isoform TAFII15</molecule>
    <text evidence="6">Does not promote the transactivation of ATF7.</text>
</comment>
<comment type="interaction">
    <interactant intactId="EBI-1034238">
        <id>Q16514</id>
    </interactant>
    <interactant intactId="EBI-2930670">
        <id>P31323</id>
        <label>PRKAR2B</label>
    </interactant>
    <organismsDiffer>false</organismsDiffer>
    <experiments>3</experiments>
</comment>
<comment type="interaction">
    <interactant intactId="EBI-1034238">
        <id>Q16514</id>
    </interactant>
    <interactant intactId="EBI-10185196">
        <id>Q6DHZ2</id>
        <label>PRKAR2B</label>
    </interactant>
    <organismsDiffer>false</organismsDiffer>
    <experiments>3</experiments>
</comment>
<comment type="interaction">
    <interactant intactId="EBI-1034238">
        <id>Q16514</id>
    </interactant>
    <interactant intactId="EBI-2510659">
        <id>Q15572</id>
        <label>TAF1C</label>
    </interactant>
    <organismsDiffer>false</organismsDiffer>
    <experiments>2</experiments>
</comment>
<comment type="interaction">
    <interactant intactId="EBI-1034238">
        <id>Q16514</id>
    </interactant>
    <interactant intactId="EBI-1034261">
        <id>O00268</id>
        <label>TAF4</label>
    </interactant>
    <organismsDiffer>false</organismsDiffer>
    <experiments>4</experiments>
</comment>
<comment type="interaction">
    <interactant intactId="EBI-1034238">
        <id>Q16514</id>
    </interactant>
    <interactant intactId="EBI-355371">
        <id>P20226</id>
        <label>TBP</label>
    </interactant>
    <organismsDiffer>false</organismsDiffer>
    <experiments>5</experiments>
</comment>
<comment type="interaction">
    <interactant intactId="EBI-1034253">
        <id>Q16514-1</id>
    </interactant>
    <interactant intactId="EBI-1034261">
        <id>O00268</id>
        <label>TAF4</label>
    </interactant>
    <organismsDiffer>false</organismsDiffer>
    <experiments>16</experiments>
</comment>
<comment type="subcellular location">
    <subcellularLocation>
        <location evidence="5 11">Nucleus</location>
    </subcellularLocation>
</comment>
<comment type="alternative products">
    <event type="alternative initiation"/>
    <isoform>
        <id>Q16514-1</id>
        <name>TAFII20</name>
        <sequence type="displayed"/>
    </isoform>
    <isoform>
        <id>Q16514-2</id>
        <name>TAFII15</name>
        <sequence type="described" ref="VSP_018888"/>
    </isoform>
</comment>
<comment type="tissue specificity">
    <text>Ubiquitous.</text>
</comment>
<comment type="similarity">
    <text evidence="14">Belongs to the TAF12 family.</text>
</comment>
<organism>
    <name type="scientific">Homo sapiens</name>
    <name type="common">Human</name>
    <dbReference type="NCBI Taxonomy" id="9606"/>
    <lineage>
        <taxon>Eukaryota</taxon>
        <taxon>Metazoa</taxon>
        <taxon>Chordata</taxon>
        <taxon>Craniata</taxon>
        <taxon>Vertebrata</taxon>
        <taxon>Euteleostomi</taxon>
        <taxon>Mammalia</taxon>
        <taxon>Eutheria</taxon>
        <taxon>Euarchontoglires</taxon>
        <taxon>Primates</taxon>
        <taxon>Haplorrhini</taxon>
        <taxon>Catarrhini</taxon>
        <taxon>Hominidae</taxon>
        <taxon>Homo</taxon>
    </lineage>
</organism>
<protein>
    <recommendedName>
        <fullName evidence="14">Transcription initiation factor TFIID subunit 12</fullName>
    </recommendedName>
    <alternativeName>
        <fullName evidence="14">Transcription initiation factor TFIID 20/15 kDa subunits</fullName>
        <shortName evidence="14">TAFII-20/TAFII-15</shortName>
        <shortName evidence="15">TAFII20/TAFII15</shortName>
    </alternativeName>
</protein>
<feature type="chain" id="PRO_0000033580" description="Transcription initiation factor TFIID subunit 12">
    <location>
        <begin position="1"/>
        <end position="161"/>
    </location>
</feature>
<feature type="domain" description="Histone-fold" evidence="1">
    <location>
        <begin position="59"/>
        <end position="126"/>
    </location>
</feature>
<feature type="region of interest" description="Disordered" evidence="2">
    <location>
        <begin position="15"/>
        <end position="55"/>
    </location>
</feature>
<feature type="compositionally biased region" description="Polar residues" evidence="2">
    <location>
        <begin position="26"/>
        <end position="36"/>
    </location>
</feature>
<feature type="modified residue" description="Phosphothreonine" evidence="26">
    <location>
        <position position="43"/>
    </location>
</feature>
<feature type="modified residue" description="Phosphoserine" evidence="26 27 28 29 30">
    <location>
        <position position="51"/>
    </location>
</feature>
<feature type="modified residue" description="Phosphothreonine" evidence="27">
    <location>
        <position position="59"/>
    </location>
</feature>
<feature type="cross-link" description="Glycyl lysine isopeptide (Lys-Gly) (interchain with G-Cter in SUMO2)" evidence="31">
    <location>
        <position position="19"/>
    </location>
</feature>
<feature type="splice variant" id="VSP_018888" description="In isoform TAFII15." evidence="13">
    <location>
        <begin position="1"/>
        <end position="30"/>
    </location>
</feature>
<feature type="mutagenesis site" description="Drastically reduces binding to TAF4." evidence="4">
    <original>IADDF</original>
    <variation>EADDK</variation>
    <location>
        <begin position="87"/>
        <end position="91"/>
    </location>
</feature>
<feature type="mutagenesis site" description="Drastically reduces binding to TAF4." evidence="4">
    <original>VV</original>
    <variation>EK</variation>
    <location>
        <begin position="95"/>
        <end position="96"/>
    </location>
</feature>
<feature type="mutagenesis site" description="Drastically reduces binding to TAF4." evidence="4">
    <original>ACQLA</original>
    <variation>RCQLR</variation>
    <location>
        <begin position="99"/>
        <end position="103"/>
    </location>
</feature>
<feature type="helix" evidence="32">
    <location>
        <begin position="60"/>
        <end position="70"/>
    </location>
</feature>
<feature type="strand" evidence="33">
    <location>
        <begin position="72"/>
        <end position="76"/>
    </location>
</feature>
<feature type="helix" evidence="32">
    <location>
        <begin position="78"/>
        <end position="105"/>
    </location>
</feature>
<feature type="strand" evidence="34">
    <location>
        <begin position="109"/>
        <end position="111"/>
    </location>
</feature>
<feature type="helix" evidence="32">
    <location>
        <begin position="113"/>
        <end position="123"/>
    </location>
</feature>
<feature type="strand" evidence="34">
    <location>
        <begin position="129"/>
        <end position="131"/>
    </location>
</feature>
<feature type="helix" evidence="34">
    <location>
        <begin position="146"/>
        <end position="160"/>
    </location>
</feature>
<accession>Q16514</accession>
<accession>D3DPM5</accession>
<accession>Q15775</accession>
<accession>Q5T077</accession>